<protein>
    <recommendedName>
        <fullName>Toxin Tb2-II</fullName>
    </recommendedName>
    <alternativeName>
        <fullName>P-Mice-Ins-beta* NaTx5.4</fullName>
    </alternativeName>
</protein>
<sequence length="62" mass="6963">KEGYAMDHEGCKFSCFIRPSGFCDGYCKTHLKASSGYCAWPACYCYGVPSNIKVWDYATNKC</sequence>
<name>SCXJ_TITBA</name>
<keyword id="KW-0903">Direct protein sequencing</keyword>
<keyword id="KW-1015">Disulfide bond</keyword>
<keyword id="KW-0872">Ion channel impairing toxin</keyword>
<keyword id="KW-0528">Neurotoxin</keyword>
<keyword id="KW-0964">Secreted</keyword>
<keyword id="KW-0800">Toxin</keyword>
<keyword id="KW-0738">Voltage-gated sodium channel impairing toxin</keyword>
<evidence type="ECO:0000250" key="1"/>
<evidence type="ECO:0000255" key="2">
    <source>
        <dbReference type="PROSITE-ProRule" id="PRU01210"/>
    </source>
</evidence>
<evidence type="ECO:0000269" key="3">
    <source>
    </source>
</evidence>
<evidence type="ECO:0000305" key="4"/>
<accession>P60276</accession>
<proteinExistence type="evidence at protein level"/>
<reference key="1">
    <citation type="journal article" date="2001" name="Toxicon">
        <title>Purification, amino-acid sequence and partial characterization of two toxins with anti-insect activity from the venom of the South American scorpion Tityus bahiensis (Buthidae).</title>
        <authorList>
            <person name="Pimenta A.M.C."/>
            <person name="Martin-Eauclaire M.-F."/>
            <person name="Rochat H."/>
            <person name="Figueiredo S.G."/>
            <person name="Kalapothakis E."/>
            <person name="Afonso L.C.C."/>
            <person name="De Lima M.E."/>
        </authorList>
    </citation>
    <scope>PROTEIN SEQUENCE</scope>
    <scope>TOXIC DOSE</scope>
    <scope>MASS SPECTROMETRY</scope>
    <source>
        <tissue>Venom</tissue>
    </source>
</reference>
<reference key="2">
    <citation type="journal article" date="2012" name="PLoS ONE">
        <title>Identification and phylogenetic analysis of Tityus pachyurus and Tityus obscurus novel putative Na+-channel scorpion toxins.</title>
        <authorList>
            <person name="Guerrero-Vargas J.A."/>
            <person name="Mourao C.B."/>
            <person name="Quintero-Hernandez V."/>
            <person name="Possani L.D."/>
            <person name="Schwartz E.F."/>
        </authorList>
    </citation>
    <scope>NOMENCLATURE</scope>
</reference>
<dbReference type="SMR" id="P60276"/>
<dbReference type="GO" id="GO:0005576">
    <property type="term" value="C:extracellular region"/>
    <property type="evidence" value="ECO:0007669"/>
    <property type="project" value="UniProtKB-SubCell"/>
</dbReference>
<dbReference type="GO" id="GO:0019871">
    <property type="term" value="F:sodium channel inhibitor activity"/>
    <property type="evidence" value="ECO:0007669"/>
    <property type="project" value="InterPro"/>
</dbReference>
<dbReference type="GO" id="GO:0090729">
    <property type="term" value="F:toxin activity"/>
    <property type="evidence" value="ECO:0007669"/>
    <property type="project" value="UniProtKB-KW"/>
</dbReference>
<dbReference type="GO" id="GO:0006952">
    <property type="term" value="P:defense response"/>
    <property type="evidence" value="ECO:0007669"/>
    <property type="project" value="InterPro"/>
</dbReference>
<dbReference type="CDD" id="cd23106">
    <property type="entry name" value="neurotoxins_LC_scorpion"/>
    <property type="match status" value="1"/>
</dbReference>
<dbReference type="FunFam" id="3.30.30.10:FF:000002">
    <property type="entry name" value="Alpha-like toxin BmK-M1"/>
    <property type="match status" value="1"/>
</dbReference>
<dbReference type="Gene3D" id="3.30.30.10">
    <property type="entry name" value="Knottin, scorpion toxin-like"/>
    <property type="match status" value="1"/>
</dbReference>
<dbReference type="InterPro" id="IPR044062">
    <property type="entry name" value="LCN-type_CS_alpha_beta_dom"/>
</dbReference>
<dbReference type="InterPro" id="IPR003614">
    <property type="entry name" value="Scorpion_toxin-like"/>
</dbReference>
<dbReference type="InterPro" id="IPR036574">
    <property type="entry name" value="Scorpion_toxin-like_sf"/>
</dbReference>
<dbReference type="InterPro" id="IPR018218">
    <property type="entry name" value="Scorpion_toxinL"/>
</dbReference>
<dbReference type="InterPro" id="IPR002061">
    <property type="entry name" value="Scorpion_toxinL/defensin"/>
</dbReference>
<dbReference type="Pfam" id="PF00537">
    <property type="entry name" value="Toxin_3"/>
    <property type="match status" value="1"/>
</dbReference>
<dbReference type="PRINTS" id="PR00285">
    <property type="entry name" value="SCORPNTOXIN"/>
</dbReference>
<dbReference type="SMART" id="SM00505">
    <property type="entry name" value="Knot1"/>
    <property type="match status" value="1"/>
</dbReference>
<dbReference type="SUPFAM" id="SSF57095">
    <property type="entry name" value="Scorpion toxin-like"/>
    <property type="match status" value="1"/>
</dbReference>
<dbReference type="PROSITE" id="PS51863">
    <property type="entry name" value="LCN_CSAB"/>
    <property type="match status" value="1"/>
</dbReference>
<organism>
    <name type="scientific">Tityus bahiensis</name>
    <name type="common">Brazilian scorpion</name>
    <dbReference type="NCBI Taxonomy" id="50343"/>
    <lineage>
        <taxon>Eukaryota</taxon>
        <taxon>Metazoa</taxon>
        <taxon>Ecdysozoa</taxon>
        <taxon>Arthropoda</taxon>
        <taxon>Chelicerata</taxon>
        <taxon>Arachnida</taxon>
        <taxon>Scorpiones</taxon>
        <taxon>Buthida</taxon>
        <taxon>Buthoidea</taxon>
        <taxon>Buthidae</taxon>
        <taxon>Tityus</taxon>
    </lineage>
</organism>
<comment type="function">
    <text evidence="1">Beta toxins bind voltage-independently at site-4 of sodium channels (Nav) and shift the voltage of activation toward more negative potentials thereby affecting sodium channel activation and promoting spontaneous and repetitive firing (By similarity). This toxin is active against both mammals and insects.</text>
</comment>
<comment type="subcellular location">
    <subcellularLocation>
        <location>Secreted</location>
    </subcellularLocation>
</comment>
<comment type="tissue specificity">
    <text>Expressed by the venom gland.</text>
</comment>
<comment type="domain">
    <text evidence="4">Has the structural arrangement of an alpha-helix connected to antiparallel beta-sheets by disulfide bonds (CS-alpha/beta).</text>
</comment>
<comment type="mass spectrometry" mass="6953.73" method="MALDI" evidence="3"/>
<comment type="toxic dose">
    <text evidence="3">LD(50) is 40.0 ng/house fly.</text>
</comment>
<comment type="similarity">
    <text evidence="4">Belongs to the long (4 C-C) scorpion toxin superfamily. Sodium channel inhibitor family. Beta subfamily.</text>
</comment>
<feature type="chain" id="PRO_0000066797" description="Toxin Tb2-II">
    <location>
        <begin position="1"/>
        <end position="62"/>
    </location>
</feature>
<feature type="domain" description="LCN-type CS-alpha/beta" evidence="2">
    <location>
        <begin position="1"/>
        <end position="62"/>
    </location>
</feature>
<feature type="disulfide bond" evidence="2">
    <location>
        <begin position="11"/>
        <end position="62"/>
    </location>
</feature>
<feature type="disulfide bond" evidence="2">
    <location>
        <begin position="15"/>
        <end position="38"/>
    </location>
</feature>
<feature type="disulfide bond" evidence="2">
    <location>
        <begin position="23"/>
        <end position="43"/>
    </location>
</feature>
<feature type="disulfide bond" evidence="2">
    <location>
        <begin position="27"/>
        <end position="45"/>
    </location>
</feature>